<gene>
    <name type="primary">PME49</name>
    <name type="synonym">ARATH49</name>
    <name type="ordered locus">At5g07420</name>
    <name type="ORF">T2I1.130</name>
</gene>
<evidence type="ECO:0000250" key="1"/>
<evidence type="ECO:0000255" key="2"/>
<evidence type="ECO:0000269" key="3">
    <source>
    </source>
</evidence>
<evidence type="ECO:0000305" key="4"/>
<organism>
    <name type="scientific">Arabidopsis thaliana</name>
    <name type="common">Mouse-ear cress</name>
    <dbReference type="NCBI Taxonomy" id="3702"/>
    <lineage>
        <taxon>Eukaryota</taxon>
        <taxon>Viridiplantae</taxon>
        <taxon>Streptophyta</taxon>
        <taxon>Embryophyta</taxon>
        <taxon>Tracheophyta</taxon>
        <taxon>Spermatophyta</taxon>
        <taxon>Magnoliopsida</taxon>
        <taxon>eudicotyledons</taxon>
        <taxon>Gunneridae</taxon>
        <taxon>Pentapetalae</taxon>
        <taxon>rosids</taxon>
        <taxon>malvids</taxon>
        <taxon>Brassicales</taxon>
        <taxon>Brassicaceae</taxon>
        <taxon>Camelineae</taxon>
        <taxon>Arabidopsis</taxon>
    </lineage>
</organism>
<dbReference type="EC" id="3.1.1.11"/>
<dbReference type="EMBL" id="AL163912">
    <property type="protein sequence ID" value="CAB87931.1"/>
    <property type="molecule type" value="Genomic_DNA"/>
</dbReference>
<dbReference type="EMBL" id="CP002688">
    <property type="protein sequence ID" value="AED91155.1"/>
    <property type="molecule type" value="Genomic_DNA"/>
</dbReference>
<dbReference type="EMBL" id="BT002768">
    <property type="protein sequence ID" value="AAO22596.1"/>
    <property type="molecule type" value="mRNA"/>
</dbReference>
<dbReference type="EMBL" id="BT005059">
    <property type="protein sequence ID" value="AAO50592.1"/>
    <property type="molecule type" value="mRNA"/>
</dbReference>
<dbReference type="EMBL" id="AY086762">
    <property type="protein sequence ID" value="AAM63813.1"/>
    <property type="molecule type" value="mRNA"/>
</dbReference>
<dbReference type="PIR" id="T49881">
    <property type="entry name" value="T49881"/>
</dbReference>
<dbReference type="RefSeq" id="NP_196359.1">
    <property type="nucleotide sequence ID" value="NM_120824.4"/>
</dbReference>
<dbReference type="SMR" id="Q9LY18"/>
<dbReference type="FunCoup" id="Q9LY18">
    <property type="interactions" value="83"/>
</dbReference>
<dbReference type="STRING" id="3702.Q9LY18"/>
<dbReference type="GlyCosmos" id="Q9LY18">
    <property type="glycosylation" value="1 site, No reported glycans"/>
</dbReference>
<dbReference type="GlyGen" id="Q9LY18">
    <property type="glycosylation" value="1 site"/>
</dbReference>
<dbReference type="PaxDb" id="3702-AT5G07420.1"/>
<dbReference type="ProteomicsDB" id="226153"/>
<dbReference type="EnsemblPlants" id="AT5G07420.1">
    <property type="protein sequence ID" value="AT5G07420.1"/>
    <property type="gene ID" value="AT5G07420"/>
</dbReference>
<dbReference type="GeneID" id="830633"/>
<dbReference type="Gramene" id="AT5G07420.1">
    <property type="protein sequence ID" value="AT5G07420.1"/>
    <property type="gene ID" value="AT5G07420"/>
</dbReference>
<dbReference type="KEGG" id="ath:AT5G07420"/>
<dbReference type="Araport" id="AT5G07420"/>
<dbReference type="TAIR" id="AT5G07420"/>
<dbReference type="eggNOG" id="ENOG502R3C8">
    <property type="taxonomic scope" value="Eukaryota"/>
</dbReference>
<dbReference type="HOGENOM" id="CLU_012243_3_3_1"/>
<dbReference type="InParanoid" id="Q9LY18"/>
<dbReference type="OMA" id="QVEAWFK"/>
<dbReference type="PhylomeDB" id="Q9LY18"/>
<dbReference type="BioCyc" id="ARA:AT5G07420-MONOMER"/>
<dbReference type="BRENDA" id="3.1.1.11">
    <property type="organism ID" value="399"/>
</dbReference>
<dbReference type="UniPathway" id="UPA00545">
    <property type="reaction ID" value="UER00823"/>
</dbReference>
<dbReference type="PRO" id="PR:Q9LY18"/>
<dbReference type="Proteomes" id="UP000006548">
    <property type="component" value="Chromosome 5"/>
</dbReference>
<dbReference type="ExpressionAtlas" id="Q9LY18">
    <property type="expression patterns" value="baseline and differential"/>
</dbReference>
<dbReference type="GO" id="GO:0005576">
    <property type="term" value="C:extracellular region"/>
    <property type="evidence" value="ECO:0007669"/>
    <property type="project" value="UniProtKB-KW"/>
</dbReference>
<dbReference type="GO" id="GO:0030599">
    <property type="term" value="F:pectinesterase activity"/>
    <property type="evidence" value="ECO:0007669"/>
    <property type="project" value="UniProtKB-EC"/>
</dbReference>
<dbReference type="GO" id="GO:0042545">
    <property type="term" value="P:cell wall modification"/>
    <property type="evidence" value="ECO:0007669"/>
    <property type="project" value="InterPro"/>
</dbReference>
<dbReference type="GO" id="GO:0045490">
    <property type="term" value="P:pectin catabolic process"/>
    <property type="evidence" value="ECO:0007669"/>
    <property type="project" value="UniProtKB-UniPathway"/>
</dbReference>
<dbReference type="FunFam" id="2.160.20.10:FF:000008">
    <property type="entry name" value="Pectinesterase"/>
    <property type="match status" value="1"/>
</dbReference>
<dbReference type="Gene3D" id="2.160.20.10">
    <property type="entry name" value="Single-stranded right-handed beta-helix, Pectin lyase-like"/>
    <property type="match status" value="1"/>
</dbReference>
<dbReference type="InterPro" id="IPR012334">
    <property type="entry name" value="Pectin_lyas_fold"/>
</dbReference>
<dbReference type="InterPro" id="IPR011050">
    <property type="entry name" value="Pectin_lyase_fold/virulence"/>
</dbReference>
<dbReference type="InterPro" id="IPR000070">
    <property type="entry name" value="Pectinesterase_cat"/>
</dbReference>
<dbReference type="PANTHER" id="PTHR31321">
    <property type="entry name" value="ACYL-COA THIOESTER HYDROLASE YBHC-RELATED"/>
    <property type="match status" value="1"/>
</dbReference>
<dbReference type="PANTHER" id="PTHR31321:SF78">
    <property type="entry name" value="PECTINESTERASE 49-RELATED"/>
    <property type="match status" value="1"/>
</dbReference>
<dbReference type="Pfam" id="PF01095">
    <property type="entry name" value="Pectinesterase"/>
    <property type="match status" value="1"/>
</dbReference>
<dbReference type="SUPFAM" id="SSF51126">
    <property type="entry name" value="Pectin lyase-like"/>
    <property type="match status" value="1"/>
</dbReference>
<keyword id="KW-0063">Aspartyl esterase</keyword>
<keyword id="KW-0134">Cell wall</keyword>
<keyword id="KW-0961">Cell wall biogenesis/degradation</keyword>
<keyword id="KW-0325">Glycoprotein</keyword>
<keyword id="KW-0378">Hydrolase</keyword>
<keyword id="KW-1185">Reference proteome</keyword>
<keyword id="KW-0964">Secreted</keyword>
<keyword id="KW-0732">Signal</keyword>
<reference key="1">
    <citation type="journal article" date="2000" name="Nature">
        <title>Sequence and analysis of chromosome 5 of the plant Arabidopsis thaliana.</title>
        <authorList>
            <person name="Tabata S."/>
            <person name="Kaneko T."/>
            <person name="Nakamura Y."/>
            <person name="Kotani H."/>
            <person name="Kato T."/>
            <person name="Asamizu E."/>
            <person name="Miyajima N."/>
            <person name="Sasamoto S."/>
            <person name="Kimura T."/>
            <person name="Hosouchi T."/>
            <person name="Kawashima K."/>
            <person name="Kohara M."/>
            <person name="Matsumoto M."/>
            <person name="Matsuno A."/>
            <person name="Muraki A."/>
            <person name="Nakayama S."/>
            <person name="Nakazaki N."/>
            <person name="Naruo K."/>
            <person name="Okumura S."/>
            <person name="Shinpo S."/>
            <person name="Takeuchi C."/>
            <person name="Wada T."/>
            <person name="Watanabe A."/>
            <person name="Yamada M."/>
            <person name="Yasuda M."/>
            <person name="Sato S."/>
            <person name="de la Bastide M."/>
            <person name="Huang E."/>
            <person name="Spiegel L."/>
            <person name="Gnoj L."/>
            <person name="O'Shaughnessy A."/>
            <person name="Preston R."/>
            <person name="Habermann K."/>
            <person name="Murray J."/>
            <person name="Johnson D."/>
            <person name="Rohlfing T."/>
            <person name="Nelson J."/>
            <person name="Stoneking T."/>
            <person name="Pepin K."/>
            <person name="Spieth J."/>
            <person name="Sekhon M."/>
            <person name="Armstrong J."/>
            <person name="Becker M."/>
            <person name="Belter E."/>
            <person name="Cordum H."/>
            <person name="Cordes M."/>
            <person name="Courtney L."/>
            <person name="Courtney W."/>
            <person name="Dante M."/>
            <person name="Du H."/>
            <person name="Edwards J."/>
            <person name="Fryman J."/>
            <person name="Haakensen B."/>
            <person name="Lamar E."/>
            <person name="Latreille P."/>
            <person name="Leonard S."/>
            <person name="Meyer R."/>
            <person name="Mulvaney E."/>
            <person name="Ozersky P."/>
            <person name="Riley A."/>
            <person name="Strowmatt C."/>
            <person name="Wagner-McPherson C."/>
            <person name="Wollam A."/>
            <person name="Yoakum M."/>
            <person name="Bell M."/>
            <person name="Dedhia N."/>
            <person name="Parnell L."/>
            <person name="Shah R."/>
            <person name="Rodriguez M."/>
            <person name="Hoon See L."/>
            <person name="Vil D."/>
            <person name="Baker J."/>
            <person name="Kirchoff K."/>
            <person name="Toth K."/>
            <person name="King L."/>
            <person name="Bahret A."/>
            <person name="Miller B."/>
            <person name="Marra M.A."/>
            <person name="Martienssen R."/>
            <person name="McCombie W.R."/>
            <person name="Wilson R.K."/>
            <person name="Murphy G."/>
            <person name="Bancroft I."/>
            <person name="Volckaert G."/>
            <person name="Wambutt R."/>
            <person name="Duesterhoeft A."/>
            <person name="Stiekema W."/>
            <person name="Pohl T."/>
            <person name="Entian K.-D."/>
            <person name="Terryn N."/>
            <person name="Hartley N."/>
            <person name="Bent E."/>
            <person name="Johnson S."/>
            <person name="Langham S.-A."/>
            <person name="McCullagh B."/>
            <person name="Robben J."/>
            <person name="Grymonprez B."/>
            <person name="Zimmermann W."/>
            <person name="Ramsperger U."/>
            <person name="Wedler H."/>
            <person name="Balke K."/>
            <person name="Wedler E."/>
            <person name="Peters S."/>
            <person name="van Staveren M."/>
            <person name="Dirkse W."/>
            <person name="Mooijman P."/>
            <person name="Klein Lankhorst R."/>
            <person name="Weitzenegger T."/>
            <person name="Bothe G."/>
            <person name="Rose M."/>
            <person name="Hauf J."/>
            <person name="Berneiser S."/>
            <person name="Hempel S."/>
            <person name="Feldpausch M."/>
            <person name="Lamberth S."/>
            <person name="Villarroel R."/>
            <person name="Gielen J."/>
            <person name="Ardiles W."/>
            <person name="Bents O."/>
            <person name="Lemcke K."/>
            <person name="Kolesov G."/>
            <person name="Mayer K.F.X."/>
            <person name="Rudd S."/>
            <person name="Schoof H."/>
            <person name="Schueller C."/>
            <person name="Zaccaria P."/>
            <person name="Mewes H.-W."/>
            <person name="Bevan M."/>
            <person name="Fransz P.F."/>
        </authorList>
    </citation>
    <scope>NUCLEOTIDE SEQUENCE [LARGE SCALE GENOMIC DNA]</scope>
    <source>
        <strain>cv. Columbia</strain>
    </source>
</reference>
<reference key="2">
    <citation type="journal article" date="2017" name="Plant J.">
        <title>Araport11: a complete reannotation of the Arabidopsis thaliana reference genome.</title>
        <authorList>
            <person name="Cheng C.Y."/>
            <person name="Krishnakumar V."/>
            <person name="Chan A.P."/>
            <person name="Thibaud-Nissen F."/>
            <person name="Schobel S."/>
            <person name="Town C.D."/>
        </authorList>
    </citation>
    <scope>GENOME REANNOTATION</scope>
    <source>
        <strain>cv. Columbia</strain>
    </source>
</reference>
<reference key="3">
    <citation type="journal article" date="2003" name="Science">
        <title>Empirical analysis of transcriptional activity in the Arabidopsis genome.</title>
        <authorList>
            <person name="Yamada K."/>
            <person name="Lim J."/>
            <person name="Dale J.M."/>
            <person name="Chen H."/>
            <person name="Shinn P."/>
            <person name="Palm C.J."/>
            <person name="Southwick A.M."/>
            <person name="Wu H.C."/>
            <person name="Kim C.J."/>
            <person name="Nguyen M."/>
            <person name="Pham P.K."/>
            <person name="Cheuk R.F."/>
            <person name="Karlin-Newmann G."/>
            <person name="Liu S.X."/>
            <person name="Lam B."/>
            <person name="Sakano H."/>
            <person name="Wu T."/>
            <person name="Yu G."/>
            <person name="Miranda M."/>
            <person name="Quach H.L."/>
            <person name="Tripp M."/>
            <person name="Chang C.H."/>
            <person name="Lee J.M."/>
            <person name="Toriumi M.J."/>
            <person name="Chan M.M."/>
            <person name="Tang C.C."/>
            <person name="Onodera C.S."/>
            <person name="Deng J.M."/>
            <person name="Akiyama K."/>
            <person name="Ansari Y."/>
            <person name="Arakawa T."/>
            <person name="Banh J."/>
            <person name="Banno F."/>
            <person name="Bowser L."/>
            <person name="Brooks S.Y."/>
            <person name="Carninci P."/>
            <person name="Chao Q."/>
            <person name="Choy N."/>
            <person name="Enju A."/>
            <person name="Goldsmith A.D."/>
            <person name="Gurjal M."/>
            <person name="Hansen N.F."/>
            <person name="Hayashizaki Y."/>
            <person name="Johnson-Hopson C."/>
            <person name="Hsuan V.W."/>
            <person name="Iida K."/>
            <person name="Karnes M."/>
            <person name="Khan S."/>
            <person name="Koesema E."/>
            <person name="Ishida J."/>
            <person name="Jiang P.X."/>
            <person name="Jones T."/>
            <person name="Kawai J."/>
            <person name="Kamiya A."/>
            <person name="Meyers C."/>
            <person name="Nakajima M."/>
            <person name="Narusaka M."/>
            <person name="Seki M."/>
            <person name="Sakurai T."/>
            <person name="Satou M."/>
            <person name="Tamse R."/>
            <person name="Vaysberg M."/>
            <person name="Wallender E.K."/>
            <person name="Wong C."/>
            <person name="Yamamura Y."/>
            <person name="Yuan S."/>
            <person name="Shinozaki K."/>
            <person name="Davis R.W."/>
            <person name="Theologis A."/>
            <person name="Ecker J.R."/>
        </authorList>
    </citation>
    <scope>NUCLEOTIDE SEQUENCE [LARGE SCALE MRNA]</scope>
    <source>
        <strain>cv. Columbia</strain>
    </source>
</reference>
<reference key="4">
    <citation type="submission" date="2002-03" db="EMBL/GenBank/DDBJ databases">
        <title>Full-length cDNA from Arabidopsis thaliana.</title>
        <authorList>
            <person name="Brover V.V."/>
            <person name="Troukhan M.E."/>
            <person name="Alexandrov N.A."/>
            <person name="Lu Y.-P."/>
            <person name="Flavell R.B."/>
            <person name="Feldmann K.A."/>
        </authorList>
    </citation>
    <scope>NUCLEOTIDE SEQUENCE [LARGE SCALE MRNA]</scope>
</reference>
<reference key="5">
    <citation type="journal article" date="2004" name="Carbohydr. Res.">
        <title>Pectin methylesterases: sequence-structural features and phylogenetic relationships.</title>
        <authorList>
            <person name="Markovic O."/>
            <person name="Janecek S."/>
        </authorList>
    </citation>
    <scope>GENE FAMILY</scope>
    <scope>NOMENCLATURE</scope>
</reference>
<reference key="6">
    <citation type="journal article" date="2006" name="Planta">
        <title>Comprehensive expression profiling of the pectin methylesterase gene family during silique development in Arabidopsis thaliana.</title>
        <authorList>
            <person name="Louvet R."/>
            <person name="Cavel E."/>
            <person name="Gutierrez L."/>
            <person name="Guenin S."/>
            <person name="Roger D."/>
            <person name="Gillet F."/>
            <person name="Guerineau F."/>
            <person name="Pelloux J."/>
        </authorList>
    </citation>
    <scope>TISSUE SPECIFICITY</scope>
</reference>
<comment type="function">
    <text evidence="1">Acts in the modification of cell walls via demethylesterification of cell wall pectin.</text>
</comment>
<comment type="catalytic activity">
    <reaction>
        <text>[(1-&gt;4)-alpha-D-galacturonosyl methyl ester](n) + n H2O = [(1-&gt;4)-alpha-D-galacturonosyl](n) + n methanol + n H(+)</text>
        <dbReference type="Rhea" id="RHEA:22380"/>
        <dbReference type="Rhea" id="RHEA-COMP:14570"/>
        <dbReference type="Rhea" id="RHEA-COMP:14573"/>
        <dbReference type="ChEBI" id="CHEBI:15377"/>
        <dbReference type="ChEBI" id="CHEBI:15378"/>
        <dbReference type="ChEBI" id="CHEBI:17790"/>
        <dbReference type="ChEBI" id="CHEBI:140522"/>
        <dbReference type="ChEBI" id="CHEBI:140523"/>
        <dbReference type="EC" id="3.1.1.11"/>
    </reaction>
</comment>
<comment type="pathway">
    <text>Glycan metabolism; pectin degradation; 2-dehydro-3-deoxy-D-gluconate from pectin: step 1/5.</text>
</comment>
<comment type="subcellular location">
    <subcellularLocation>
        <location evidence="1">Secreted</location>
        <location evidence="1">Cell wall</location>
    </subcellularLocation>
</comment>
<comment type="tissue specificity">
    <text evidence="3">Expressed in flower buds.</text>
</comment>
<comment type="similarity">
    <text evidence="4">Belongs to the pectinesterase family.</text>
</comment>
<feature type="signal peptide" evidence="2">
    <location>
        <begin position="1"/>
        <end position="22"/>
    </location>
</feature>
<feature type="chain" id="PRO_0000371697" description="Probable pectinesterase 49">
    <location>
        <begin position="23"/>
        <end position="361"/>
    </location>
</feature>
<feature type="active site" description="Proton donor" evidence="1">
    <location>
        <position position="197"/>
    </location>
</feature>
<feature type="active site" description="Nucleophile" evidence="1">
    <location>
        <position position="218"/>
    </location>
</feature>
<feature type="binding site" evidence="1">
    <location>
        <position position="174"/>
    </location>
    <ligand>
        <name>substrate</name>
    </ligand>
</feature>
<feature type="binding site" evidence="1">
    <location>
        <position position="275"/>
    </location>
    <ligand>
        <name>substrate</name>
    </ligand>
</feature>
<feature type="binding site" evidence="1">
    <location>
        <position position="277"/>
    </location>
    <ligand>
        <name>substrate</name>
    </ligand>
</feature>
<feature type="site" description="Transition state stabilizer" evidence="1">
    <location>
        <position position="196"/>
    </location>
</feature>
<feature type="glycosylation site" description="N-linked (GlcNAc...) asparagine" evidence="2">
    <location>
        <position position="128"/>
    </location>
</feature>
<name>PME49_ARATH</name>
<sequence length="361" mass="39658">MGYISLALVALLVFFASPVVLADDITPIPADRAQIPQWFMANVKPFSQRRGTLDPELEAAEASRRVIIVNQNGGGDFKTINAAIKSIPLANKNRVIIKLAPGIYHEKVTVDVGRPYVTLLGKPGAETNLTYAGTAAKYGTVESATLIVWATNFLAANLNIINTSPMPKPGTQGQALAMRINGDKAAFYNCRFYGFQDTLCDDRGNHFFKNCYIEGTYDFIFGRGASLYLTTQLHAVGDGLRVIAAHNRQSTTEQNGYSFVHCKVTGVGTGIYLGRAWMSHPKVVYSYTEMSSVVNPSGWQENRVRAHDKTVFYGEYMCTGPGSHKAKRVAHTQDIDNKEASQFLTLGYIKGSKWLLPPPAY</sequence>
<proteinExistence type="evidence at transcript level"/>
<protein>
    <recommendedName>
        <fullName>Probable pectinesterase 49</fullName>
        <shortName>PE 49</shortName>
        <ecNumber>3.1.1.11</ecNumber>
    </recommendedName>
    <alternativeName>
        <fullName>Pectin methylesterase 49</fullName>
        <shortName>AtPME49</shortName>
    </alternativeName>
</protein>
<accession>Q9LY18</accession>